<gene>
    <name type="primary">IRX15</name>
    <name type="ordered locus">At3g50220</name>
    <name type="ORF">F11C160</name>
</gene>
<sequence>MKNGSGNTNTKLILLHPYIQKQTSTTRLWLLAFVSFFTIVFLLTLLYTRDTIPSKNTSVAAAVAAVVTGGSTPSASSPISNSNLPTSAINALLHYASRSNDSFHMSYGEMKSISDVLRRCAPPCNLLVFGLTHETLLWKSLNHNGRTVFIEENRYYAAYFEEIHPEIDVFDVQYTTKAHEAGELVTAAKEAAGNECRPVQNLLFSDCKLGLNDLPNHVYDVDWDVIFVDGPRGDAHEGPGRMSSIFTAAVLARSKKGGTPKTHVFVHDYYRDVERLCGDEFLCRENLVESNDLLAHYVLDKMDKNSTKFCNGRKKRSVSSLS</sequence>
<reference key="1">
    <citation type="journal article" date="2000" name="Nature">
        <title>Sequence and analysis of chromosome 3 of the plant Arabidopsis thaliana.</title>
        <authorList>
            <person name="Salanoubat M."/>
            <person name="Lemcke K."/>
            <person name="Rieger M."/>
            <person name="Ansorge W."/>
            <person name="Unseld M."/>
            <person name="Fartmann B."/>
            <person name="Valle G."/>
            <person name="Bloecker H."/>
            <person name="Perez-Alonso M."/>
            <person name="Obermaier B."/>
            <person name="Delseny M."/>
            <person name="Boutry M."/>
            <person name="Grivell L.A."/>
            <person name="Mache R."/>
            <person name="Puigdomenech P."/>
            <person name="De Simone V."/>
            <person name="Choisne N."/>
            <person name="Artiguenave F."/>
            <person name="Robert C."/>
            <person name="Brottier P."/>
            <person name="Wincker P."/>
            <person name="Cattolico L."/>
            <person name="Weissenbach J."/>
            <person name="Saurin W."/>
            <person name="Quetier F."/>
            <person name="Schaefer M."/>
            <person name="Mueller-Auer S."/>
            <person name="Gabel C."/>
            <person name="Fuchs M."/>
            <person name="Benes V."/>
            <person name="Wurmbach E."/>
            <person name="Drzonek H."/>
            <person name="Erfle H."/>
            <person name="Jordan N."/>
            <person name="Bangert S."/>
            <person name="Wiedelmann R."/>
            <person name="Kranz H."/>
            <person name="Voss H."/>
            <person name="Holland R."/>
            <person name="Brandt P."/>
            <person name="Nyakatura G."/>
            <person name="Vezzi A."/>
            <person name="D'Angelo M."/>
            <person name="Pallavicini A."/>
            <person name="Toppo S."/>
            <person name="Simionati B."/>
            <person name="Conrad A."/>
            <person name="Hornischer K."/>
            <person name="Kauer G."/>
            <person name="Loehnert T.-H."/>
            <person name="Nordsiek G."/>
            <person name="Reichelt J."/>
            <person name="Scharfe M."/>
            <person name="Schoen O."/>
            <person name="Bargues M."/>
            <person name="Terol J."/>
            <person name="Climent J."/>
            <person name="Navarro P."/>
            <person name="Collado C."/>
            <person name="Perez-Perez A."/>
            <person name="Ottenwaelder B."/>
            <person name="Duchemin D."/>
            <person name="Cooke R."/>
            <person name="Laudie M."/>
            <person name="Berger-Llauro C."/>
            <person name="Purnelle B."/>
            <person name="Masuy D."/>
            <person name="de Haan M."/>
            <person name="Maarse A.C."/>
            <person name="Alcaraz J.-P."/>
            <person name="Cottet A."/>
            <person name="Casacuberta E."/>
            <person name="Monfort A."/>
            <person name="Argiriou A."/>
            <person name="Flores M."/>
            <person name="Liguori R."/>
            <person name="Vitale D."/>
            <person name="Mannhaupt G."/>
            <person name="Haase D."/>
            <person name="Schoof H."/>
            <person name="Rudd S."/>
            <person name="Zaccaria P."/>
            <person name="Mewes H.-W."/>
            <person name="Mayer K.F.X."/>
            <person name="Kaul S."/>
            <person name="Town C.D."/>
            <person name="Koo H.L."/>
            <person name="Tallon L.J."/>
            <person name="Jenkins J."/>
            <person name="Rooney T."/>
            <person name="Rizzo M."/>
            <person name="Walts A."/>
            <person name="Utterback T."/>
            <person name="Fujii C.Y."/>
            <person name="Shea T.P."/>
            <person name="Creasy T.H."/>
            <person name="Haas B."/>
            <person name="Maiti R."/>
            <person name="Wu D."/>
            <person name="Peterson J."/>
            <person name="Van Aken S."/>
            <person name="Pai G."/>
            <person name="Militscher J."/>
            <person name="Sellers P."/>
            <person name="Gill J.E."/>
            <person name="Feldblyum T.V."/>
            <person name="Preuss D."/>
            <person name="Lin X."/>
            <person name="Nierman W.C."/>
            <person name="Salzberg S.L."/>
            <person name="White O."/>
            <person name="Venter J.C."/>
            <person name="Fraser C.M."/>
            <person name="Kaneko T."/>
            <person name="Nakamura Y."/>
            <person name="Sato S."/>
            <person name="Kato T."/>
            <person name="Asamizu E."/>
            <person name="Sasamoto S."/>
            <person name="Kimura T."/>
            <person name="Idesawa K."/>
            <person name="Kawashima K."/>
            <person name="Kishida Y."/>
            <person name="Kiyokawa C."/>
            <person name="Kohara M."/>
            <person name="Matsumoto M."/>
            <person name="Matsuno A."/>
            <person name="Muraki A."/>
            <person name="Nakayama S."/>
            <person name="Nakazaki N."/>
            <person name="Shinpo S."/>
            <person name="Takeuchi C."/>
            <person name="Wada T."/>
            <person name="Watanabe A."/>
            <person name="Yamada M."/>
            <person name="Yasuda M."/>
            <person name="Tabata S."/>
        </authorList>
    </citation>
    <scope>NUCLEOTIDE SEQUENCE [LARGE SCALE GENOMIC DNA]</scope>
    <source>
        <strain>cv. Columbia</strain>
    </source>
</reference>
<reference key="2">
    <citation type="journal article" date="2017" name="Plant J.">
        <title>Araport11: a complete reannotation of the Arabidopsis thaliana reference genome.</title>
        <authorList>
            <person name="Cheng C.Y."/>
            <person name="Krishnakumar V."/>
            <person name="Chan A.P."/>
            <person name="Thibaud-Nissen F."/>
            <person name="Schobel S."/>
            <person name="Town C.D."/>
        </authorList>
    </citation>
    <scope>GENOME REANNOTATION</scope>
    <source>
        <strain>cv. Columbia</strain>
    </source>
</reference>
<reference key="3">
    <citation type="submission" date="2005-03" db="EMBL/GenBank/DDBJ databases">
        <title>Large-scale analysis of RIKEN Arabidopsis full-length (RAFL) cDNAs.</title>
        <authorList>
            <person name="Totoki Y."/>
            <person name="Seki M."/>
            <person name="Ishida J."/>
            <person name="Nakajima M."/>
            <person name="Enju A."/>
            <person name="Kamiya A."/>
            <person name="Narusaka M."/>
            <person name="Shin-i T."/>
            <person name="Nakagawa M."/>
            <person name="Sakamoto N."/>
            <person name="Oishi K."/>
            <person name="Kohara Y."/>
            <person name="Kobayashi M."/>
            <person name="Toyoda A."/>
            <person name="Sakaki Y."/>
            <person name="Sakurai T."/>
            <person name="Iida K."/>
            <person name="Akiyama K."/>
            <person name="Satou M."/>
            <person name="Toyoda T."/>
            <person name="Konagaya A."/>
            <person name="Carninci P."/>
            <person name="Kawai J."/>
            <person name="Hayashizaki Y."/>
            <person name="Shinozaki K."/>
        </authorList>
    </citation>
    <scope>NUCLEOTIDE SEQUENCE [LARGE SCALE MRNA]</scope>
    <source>
        <strain>cv. Columbia</strain>
    </source>
</reference>
<reference key="4">
    <citation type="journal article" date="2006" name="Plant Biotechnol. J.">
        <title>Simultaneous high-throughput recombinational cloning of open reading frames in closed and open configurations.</title>
        <authorList>
            <person name="Underwood B.A."/>
            <person name="Vanderhaeghen R."/>
            <person name="Whitford R."/>
            <person name="Town C.D."/>
            <person name="Hilson P."/>
        </authorList>
    </citation>
    <scope>NUCLEOTIDE SEQUENCE [LARGE SCALE MRNA]</scope>
    <source>
        <strain>cv. Columbia</strain>
    </source>
</reference>
<reference key="5">
    <citation type="submission" date="2002-03" db="EMBL/GenBank/DDBJ databases">
        <title>Full-length cDNA from Arabidopsis thaliana.</title>
        <authorList>
            <person name="Brover V.V."/>
            <person name="Troukhan M.E."/>
            <person name="Alexandrov N.A."/>
            <person name="Lu Y.-P."/>
            <person name="Flavell R.B."/>
            <person name="Feldmann K.A."/>
        </authorList>
    </citation>
    <scope>NUCLEOTIDE SEQUENCE [LARGE SCALE MRNA]</scope>
</reference>
<reference key="6">
    <citation type="journal article" date="2006" name="Mol. Genet. Genomics">
        <title>Global comparative transcriptome analysis identifies gene network regulating secondary xylem development in Arabidopsis thaliana.</title>
        <authorList>
            <person name="Ko J.H."/>
            <person name="Beers E.P."/>
            <person name="Han K.H."/>
        </authorList>
    </citation>
    <scope>DEVELOPMENTAL STAGE</scope>
</reference>
<reference key="7">
    <citation type="journal article" date="2011" name="Plant J.">
        <title>The DUF579 domain containing proteins IRX15 and IRX15-L affect xylan synthesis in Arabidopsis.</title>
        <authorList>
            <person name="Jensen J.K."/>
            <person name="Kim H."/>
            <person name="Cocuron J.C."/>
            <person name="Orler R."/>
            <person name="Ralph J."/>
            <person name="Wilkerson C.G."/>
        </authorList>
    </citation>
    <scope>FUNCTION</scope>
    <scope>DISRUPTION PHENOTYPE</scope>
    <scope>SUBCELLULAR LOCATION</scope>
    <scope>TISSUE SPECIFICITY</scope>
</reference>
<reference key="8">
    <citation type="journal article" date="2011" name="Plant J.">
        <title>Arabidopsis genes IRREGULAR XYLEM (IRX15) and IRX15L encode DUF579-containing proteins that are essential for normal xylan deposition in the secondary cell wall.</title>
        <authorList>
            <person name="Brown D."/>
            <person name="Wightman R."/>
            <person name="Zhang Z."/>
            <person name="Gomez L.D."/>
            <person name="Atanassov I."/>
            <person name="Bukowski J.P."/>
            <person name="Tryfona T."/>
            <person name="McQueen-Mason S.J."/>
            <person name="Dupree P."/>
            <person name="Turner S."/>
        </authorList>
    </citation>
    <scope>FUNCTION</scope>
    <scope>TISSUE SPECIFICITY</scope>
    <scope>DISRUPTION PHENOTYPE</scope>
    <scope>DEVELOPMENTAL STAGE</scope>
    <scope>SUBCELLULAR LOCATION</scope>
</reference>
<protein>
    <recommendedName>
        <fullName>Protein IRREGULAR XYLEM 15</fullName>
        <shortName>AtIRX15</shortName>
    </recommendedName>
</protein>
<name>IRX15_ARATH</name>
<dbReference type="EMBL" id="AL132976">
    <property type="protein sequence ID" value="CAB62301.1"/>
    <property type="molecule type" value="Genomic_DNA"/>
</dbReference>
<dbReference type="EMBL" id="CP002686">
    <property type="protein sequence ID" value="AEE78642.1"/>
    <property type="molecule type" value="Genomic_DNA"/>
</dbReference>
<dbReference type="EMBL" id="AK221924">
    <property type="protein sequence ID" value="BAD94344.1"/>
    <property type="molecule type" value="mRNA"/>
</dbReference>
<dbReference type="EMBL" id="DQ446752">
    <property type="protein sequence ID" value="ABE66005.1"/>
    <property type="molecule type" value="mRNA"/>
</dbReference>
<dbReference type="EMBL" id="DQ653142">
    <property type="protein sequence ID" value="ABK28594.1"/>
    <property type="status" value="ALT_SEQ"/>
    <property type="molecule type" value="mRNA"/>
</dbReference>
<dbReference type="EMBL" id="AY087437">
    <property type="protein sequence ID" value="AAM64983.1"/>
    <property type="molecule type" value="mRNA"/>
</dbReference>
<dbReference type="PIR" id="T45568">
    <property type="entry name" value="T45568"/>
</dbReference>
<dbReference type="RefSeq" id="NP_190591.1">
    <property type="nucleotide sequence ID" value="NM_114882.2"/>
</dbReference>
<dbReference type="BioGRID" id="9502">
    <property type="interactions" value="9"/>
</dbReference>
<dbReference type="FunCoup" id="Q9SNE5">
    <property type="interactions" value="135"/>
</dbReference>
<dbReference type="IntAct" id="Q9SNE5">
    <property type="interactions" value="9"/>
</dbReference>
<dbReference type="STRING" id="3702.Q9SNE5"/>
<dbReference type="PaxDb" id="3702-AT3G50220.1"/>
<dbReference type="ProteomicsDB" id="247052"/>
<dbReference type="EnsemblPlants" id="AT3G50220.1">
    <property type="protein sequence ID" value="AT3G50220.1"/>
    <property type="gene ID" value="AT3G50220"/>
</dbReference>
<dbReference type="GeneID" id="824184"/>
<dbReference type="Gramene" id="AT3G50220.1">
    <property type="protein sequence ID" value="AT3G50220.1"/>
    <property type="gene ID" value="AT3G50220"/>
</dbReference>
<dbReference type="KEGG" id="ath:AT3G50220"/>
<dbReference type="Araport" id="AT3G50220"/>
<dbReference type="TAIR" id="AT3G50220">
    <property type="gene designation" value="IRX15"/>
</dbReference>
<dbReference type="eggNOG" id="ENOG502QRED">
    <property type="taxonomic scope" value="Eukaryota"/>
</dbReference>
<dbReference type="HOGENOM" id="CLU_053427_2_0_1"/>
<dbReference type="InParanoid" id="Q9SNE5"/>
<dbReference type="OMA" id="LLHPYIL"/>
<dbReference type="PhylomeDB" id="Q9SNE5"/>
<dbReference type="PRO" id="PR:Q9SNE5"/>
<dbReference type="Proteomes" id="UP000006548">
    <property type="component" value="Chromosome 3"/>
</dbReference>
<dbReference type="ExpressionAtlas" id="Q9SNE5">
    <property type="expression patterns" value="baseline and differential"/>
</dbReference>
<dbReference type="GO" id="GO:0005794">
    <property type="term" value="C:Golgi apparatus"/>
    <property type="evidence" value="ECO:0000314"/>
    <property type="project" value="TAIR"/>
</dbReference>
<dbReference type="GO" id="GO:0000139">
    <property type="term" value="C:Golgi membrane"/>
    <property type="evidence" value="ECO:0007669"/>
    <property type="project" value="UniProtKB-SubCell"/>
</dbReference>
<dbReference type="GO" id="GO:0009834">
    <property type="term" value="P:plant-type secondary cell wall biogenesis"/>
    <property type="evidence" value="ECO:0000315"/>
    <property type="project" value="TAIR"/>
</dbReference>
<dbReference type="GO" id="GO:0045492">
    <property type="term" value="P:xylan biosynthetic process"/>
    <property type="evidence" value="ECO:0000315"/>
    <property type="project" value="TAIR"/>
</dbReference>
<dbReference type="InterPro" id="IPR006514">
    <property type="entry name" value="IRX15/GXM/AGM"/>
</dbReference>
<dbReference type="NCBIfam" id="TIGR01627">
    <property type="entry name" value="A_thal_3515"/>
    <property type="match status" value="1"/>
</dbReference>
<dbReference type="PANTHER" id="PTHR31444">
    <property type="entry name" value="OS11G0490100 PROTEIN"/>
    <property type="match status" value="1"/>
</dbReference>
<dbReference type="Pfam" id="PF21729">
    <property type="entry name" value="IRX15_IRX15L_GXM"/>
    <property type="match status" value="1"/>
</dbReference>
<organism>
    <name type="scientific">Arabidopsis thaliana</name>
    <name type="common">Mouse-ear cress</name>
    <dbReference type="NCBI Taxonomy" id="3702"/>
    <lineage>
        <taxon>Eukaryota</taxon>
        <taxon>Viridiplantae</taxon>
        <taxon>Streptophyta</taxon>
        <taxon>Embryophyta</taxon>
        <taxon>Tracheophyta</taxon>
        <taxon>Spermatophyta</taxon>
        <taxon>Magnoliopsida</taxon>
        <taxon>eudicotyledons</taxon>
        <taxon>Gunneridae</taxon>
        <taxon>Pentapetalae</taxon>
        <taxon>rosids</taxon>
        <taxon>malvids</taxon>
        <taxon>Brassicales</taxon>
        <taxon>Brassicaceae</taxon>
        <taxon>Camelineae</taxon>
        <taxon>Arabidopsis</taxon>
    </lineage>
</organism>
<accession>Q9SNE5</accession>
<accession>A0MF18</accession>
<accession>Q56WV6</accession>
<accession>Q8LB40</accession>
<evidence type="ECO:0000255" key="1"/>
<evidence type="ECO:0000269" key="2">
    <source>
    </source>
</evidence>
<evidence type="ECO:0000269" key="3">
    <source>
    </source>
</evidence>
<evidence type="ECO:0000269" key="4">
    <source>
    </source>
</evidence>
<evidence type="ECO:0000305" key="5"/>
<proteinExistence type="evidence at transcript level"/>
<keyword id="KW-0333">Golgi apparatus</keyword>
<keyword id="KW-0472">Membrane</keyword>
<keyword id="KW-1185">Reference proteome</keyword>
<keyword id="KW-0812">Transmembrane</keyword>
<keyword id="KW-1133">Transmembrane helix</keyword>
<comment type="function">
    <text evidence="3 4">Required for xylan biosynthesis, but not directly involved in catalyzing the addition of sugars to the growing polymer.</text>
</comment>
<comment type="subcellular location">
    <subcellularLocation>
        <location evidence="5">Golgi apparatus membrane</location>
        <topology evidence="5">Single-pass membrane protein</topology>
    </subcellularLocation>
    <text evidence="3 4">Also located in an unknown intracellular compartment that may have some role in the transport of cell wall polysaccharides into the cell wall.</text>
</comment>
<comment type="tissue specificity">
    <text evidence="3 4">Expressed in rosette leaves, stems and siliques. Expressed in the xylem.</text>
</comment>
<comment type="developmental stage">
    <text evidence="2 3">Up-regulated during secondary cell wall deposition.</text>
</comment>
<comment type="disruption phenotype">
    <text evidence="3 4">No visible phenotype; due to the redundancy with IRX15-L. Irx15 and irx15-l double mutants have a mild collapsed xylem phenotype, irregular secondary cell wall margins in fiber cells, uneven distribution of xylan in the cell wall and a lower degree of xylan polymerization, but no visible growth phenotype.</text>
</comment>
<comment type="sequence caution" evidence="5">
    <conflict type="erroneous termination">
        <sequence resource="EMBL-CDS" id="ABK28594"/>
    </conflict>
    <text>Extended C-terminus.</text>
</comment>
<feature type="chain" id="PRO_0000420833" description="Protein IRREGULAR XYLEM 15">
    <location>
        <begin position="1"/>
        <end position="322"/>
    </location>
</feature>
<feature type="transmembrane region" description="Helical" evidence="1">
    <location>
        <begin position="28"/>
        <end position="48"/>
    </location>
</feature>
<feature type="sequence conflict" description="In Ref. 5; AAM64983." evidence="5" ref="5">
    <original>V</original>
    <variation>L</variation>
    <location>
        <position position="148"/>
    </location>
</feature>
<feature type="sequence conflict" description="In Ref. 5; AAM64983." evidence="5" ref="5">
    <original>T</original>
    <variation>N</variation>
    <location>
        <position position="259"/>
    </location>
</feature>
<feature type="sequence conflict" description="In Ref. 3; BAD94344." evidence="5" ref="3">
    <original>K</original>
    <variation>E</variation>
    <location>
        <position position="301"/>
    </location>
</feature>